<evidence type="ECO:0000255" key="1">
    <source>
        <dbReference type="HAMAP-Rule" id="MF_00314"/>
    </source>
</evidence>
<proteinExistence type="inferred from homology"/>
<comment type="function">
    <text evidence="1">Component of the A-type ATP synthase that produces ATP from ADP in the presence of a proton gradient across the membrane.</text>
</comment>
<comment type="subunit">
    <text evidence="1">Has multiple subunits with at least A(3), B(3), C, D, E, F, H, I and proteolipid K(x).</text>
</comment>
<comment type="subcellular location">
    <subcellularLocation>
        <location evidence="1">Cell membrane</location>
        <topology evidence="1">Peripheral membrane protein</topology>
    </subcellularLocation>
</comment>
<comment type="similarity">
    <text evidence="1">Belongs to the V-ATPase V0D/AC39 subunit family.</text>
</comment>
<gene>
    <name evidence="1" type="primary">atpC</name>
    <name type="ordered locus">HVO_0314</name>
</gene>
<dbReference type="EMBL" id="X79516">
    <property type="protein sequence ID" value="CAA56049.1"/>
    <property type="molecule type" value="Genomic_DNA"/>
</dbReference>
<dbReference type="EMBL" id="CP001956">
    <property type="protein sequence ID" value="ADE03564.1"/>
    <property type="molecule type" value="Genomic_DNA"/>
</dbReference>
<dbReference type="PIR" id="T47201">
    <property type="entry name" value="T47201"/>
</dbReference>
<dbReference type="RefSeq" id="WP_004044609.1">
    <property type="nucleotide sequence ID" value="NC_013967.1"/>
</dbReference>
<dbReference type="SMR" id="Q48330"/>
<dbReference type="STRING" id="309800.HVO_0314"/>
<dbReference type="PaxDb" id="309800-C498_17118"/>
<dbReference type="EnsemblBacteria" id="ADE03564">
    <property type="protein sequence ID" value="ADE03564"/>
    <property type="gene ID" value="HVO_0314"/>
</dbReference>
<dbReference type="GeneID" id="8926092"/>
<dbReference type="KEGG" id="hvo:HVO_0314"/>
<dbReference type="eggNOG" id="arCOG02459">
    <property type="taxonomic scope" value="Archaea"/>
</dbReference>
<dbReference type="HOGENOM" id="CLU_059311_0_1_2"/>
<dbReference type="OrthoDB" id="4272at2157"/>
<dbReference type="Proteomes" id="UP000008243">
    <property type="component" value="Chromosome"/>
</dbReference>
<dbReference type="GO" id="GO:0005886">
    <property type="term" value="C:plasma membrane"/>
    <property type="evidence" value="ECO:0007669"/>
    <property type="project" value="UniProtKB-SubCell"/>
</dbReference>
<dbReference type="GO" id="GO:0033179">
    <property type="term" value="C:proton-transporting V-type ATPase, V0 domain"/>
    <property type="evidence" value="ECO:0007669"/>
    <property type="project" value="InterPro"/>
</dbReference>
<dbReference type="GO" id="GO:0005524">
    <property type="term" value="F:ATP binding"/>
    <property type="evidence" value="ECO:0007669"/>
    <property type="project" value="UniProtKB-UniRule"/>
</dbReference>
<dbReference type="GO" id="GO:0046933">
    <property type="term" value="F:proton-transporting ATP synthase activity, rotational mechanism"/>
    <property type="evidence" value="ECO:0007669"/>
    <property type="project" value="UniProtKB-UniRule"/>
</dbReference>
<dbReference type="GO" id="GO:0046961">
    <property type="term" value="F:proton-transporting ATPase activity, rotational mechanism"/>
    <property type="evidence" value="ECO:0007669"/>
    <property type="project" value="InterPro"/>
</dbReference>
<dbReference type="GO" id="GO:0042777">
    <property type="term" value="P:proton motive force-driven plasma membrane ATP synthesis"/>
    <property type="evidence" value="ECO:0007669"/>
    <property type="project" value="UniProtKB-UniRule"/>
</dbReference>
<dbReference type="Gene3D" id="1.10.132.50">
    <property type="entry name" value="ATP synthase (C/AC39) subunit, domain 3"/>
    <property type="match status" value="1"/>
</dbReference>
<dbReference type="Gene3D" id="1.20.1690.10">
    <property type="entry name" value="V-type ATP synthase subunit C domain"/>
    <property type="match status" value="2"/>
</dbReference>
<dbReference type="HAMAP" id="MF_00314">
    <property type="entry name" value="ATP_synth_C_arch"/>
    <property type="match status" value="1"/>
</dbReference>
<dbReference type="InterPro" id="IPR036079">
    <property type="entry name" value="ATPase_csu/dsu_sf"/>
</dbReference>
<dbReference type="InterPro" id="IPR014272">
    <property type="entry name" value="ATPase_V0-cplx_csu"/>
</dbReference>
<dbReference type="InterPro" id="IPR002843">
    <property type="entry name" value="ATPase_V0-cplx_csu/dsu"/>
</dbReference>
<dbReference type="InterPro" id="IPR050873">
    <property type="entry name" value="V-ATPase_V0D/AC39_subunit"/>
</dbReference>
<dbReference type="InterPro" id="IPR035067">
    <property type="entry name" value="V-type_ATPase_csu/dsu"/>
</dbReference>
<dbReference type="InterPro" id="IPR044911">
    <property type="entry name" value="V-type_ATPase_csu/dsu_dom_3"/>
</dbReference>
<dbReference type="NCBIfam" id="TIGR02923">
    <property type="entry name" value="AhaC"/>
    <property type="match status" value="1"/>
</dbReference>
<dbReference type="NCBIfam" id="NF002265">
    <property type="entry name" value="PRK01198.1-1"/>
    <property type="match status" value="1"/>
</dbReference>
<dbReference type="PANTHER" id="PTHR38682">
    <property type="entry name" value="V-TYPE ATP SYNTHASE SUBUNIT C"/>
    <property type="match status" value="1"/>
</dbReference>
<dbReference type="PANTHER" id="PTHR38682:SF1">
    <property type="entry name" value="V-TYPE ATP SYNTHASE SUBUNIT C"/>
    <property type="match status" value="1"/>
</dbReference>
<dbReference type="Pfam" id="PF01992">
    <property type="entry name" value="vATP-synt_AC39"/>
    <property type="match status" value="1"/>
</dbReference>
<dbReference type="SUPFAM" id="SSF103486">
    <property type="entry name" value="V-type ATP synthase subunit C"/>
    <property type="match status" value="1"/>
</dbReference>
<name>AATC_HALVD</name>
<feature type="chain" id="PRO_0000119364" description="A-type ATP synthase subunit C">
    <location>
        <begin position="1"/>
        <end position="348"/>
    </location>
</feature>
<organism>
    <name type="scientific">Haloferax volcanii (strain ATCC 29605 / DSM 3757 / JCM 8879 / NBRC 14742 / NCIMB 2012 / VKM B-1768 / DS2)</name>
    <name type="common">Halobacterium volcanii</name>
    <dbReference type="NCBI Taxonomy" id="309800"/>
    <lineage>
        <taxon>Archaea</taxon>
        <taxon>Methanobacteriati</taxon>
        <taxon>Methanobacteriota</taxon>
        <taxon>Stenosarchaea group</taxon>
        <taxon>Halobacteria</taxon>
        <taxon>Halobacteriales</taxon>
        <taxon>Haloferacaceae</taxon>
        <taxon>Haloferax</taxon>
    </lineage>
</organism>
<keyword id="KW-0066">ATP synthesis</keyword>
<keyword id="KW-1003">Cell membrane</keyword>
<keyword id="KW-0375">Hydrogen ion transport</keyword>
<keyword id="KW-0406">Ion transport</keyword>
<keyword id="KW-0472">Membrane</keyword>
<keyword id="KW-1185">Reference proteome</keyword>
<keyword id="KW-0813">Transport</keyword>
<reference key="1">
    <citation type="journal article" date="1995" name="Biochim. Biophys. Acta">
        <title>Nucleotide sequence of the ATPase A- and B-subunits of the halophilic archaebacterium Haloferax volcanii and characterization of the enzyme.</title>
        <authorList>
            <person name="Steinert K."/>
            <person name="Kroth-Pancic P.G."/>
            <person name="Bickel-Sandkoetter S."/>
        </authorList>
    </citation>
    <scope>NUCLEOTIDE SEQUENCE [GENOMIC DNA]</scope>
    <source>
        <strain>DS2 / WR 340</strain>
    </source>
</reference>
<reference key="2">
    <citation type="journal article" date="2010" name="PLoS ONE">
        <title>The complete genome sequence of Haloferax volcanii DS2, a model archaeon.</title>
        <authorList>
            <person name="Hartman A.L."/>
            <person name="Norais C."/>
            <person name="Badger J.H."/>
            <person name="Delmas S."/>
            <person name="Haldenby S."/>
            <person name="Madupu R."/>
            <person name="Robinson J."/>
            <person name="Khouri H."/>
            <person name="Ren Q."/>
            <person name="Lowe T.M."/>
            <person name="Maupin-Furlow J."/>
            <person name="Pohlschroder M."/>
            <person name="Daniels C."/>
            <person name="Pfeiffer F."/>
            <person name="Allers T."/>
            <person name="Eisen J.A."/>
        </authorList>
    </citation>
    <scope>NUCLEOTIDE SEQUENCE [LARGE SCALE GENOMIC DNA]</scope>
    <source>
        <strain>ATCC 29605 / DSM 3757 / JCM 8879 / NBRC 14742 / NCIMB 2012 / VKM B-1768 / DS2</strain>
    </source>
</reference>
<accession>Q48330</accession>
<accession>D4GZU3</accession>
<sequence>MSTTGGSNPEYVIARVRARRSALFGDEEYRKLVRMGPAEIARFMEESEYEAEVNALGSRFSGVDLIEYALNQNLAKQFNDILDWADGRLYDLIARYLRKFDAWNVKTVIRGLYSGASREEVESDLIRAGEFDDRLISRLLDAGEIEEVVSVLSGTIFGDGLAAAYEEYEEVGVLVPLENAVDRAFYEQLLDDLVVGEEAKQYREFLEAEIDFRNARNALRIARSGADLDPVDYFIEGGTLFRATELASLATSPDELVSKIRDSRYGDRLSAALSDLEAADSLIGFERALDAALLEYADTLGYVFPLSVTPIVSYILAKEREVDNIRAIARGREAGLDPDAIEAELVIL</sequence>
<protein>
    <recommendedName>
        <fullName evidence="1">A-type ATP synthase subunit C</fullName>
    </recommendedName>
</protein>